<reference key="1">
    <citation type="journal article" date="2005" name="Nat. Biotechnol.">
        <title>The genome sequence of the ethanologenic bacterium Zymomonas mobilis ZM4.</title>
        <authorList>
            <person name="Seo J.-S."/>
            <person name="Chong H."/>
            <person name="Park H.S."/>
            <person name="Yoon K.-O."/>
            <person name="Jung C."/>
            <person name="Kim J.J."/>
            <person name="Hong J.H."/>
            <person name="Kim H."/>
            <person name="Kim J.-H."/>
            <person name="Kil J.-I."/>
            <person name="Park C.J."/>
            <person name="Oh H.-M."/>
            <person name="Lee J.-S."/>
            <person name="Jin S.-J."/>
            <person name="Um H.-W."/>
            <person name="Lee H.-J."/>
            <person name="Oh S.-J."/>
            <person name="Kim J.Y."/>
            <person name="Kang H.L."/>
            <person name="Lee S.Y."/>
            <person name="Lee K.J."/>
            <person name="Kang H.S."/>
        </authorList>
    </citation>
    <scope>NUCLEOTIDE SEQUENCE [LARGE SCALE GENOMIC DNA]</scope>
    <source>
        <strain>ATCC 31821 / ZM4 / CP4</strain>
    </source>
</reference>
<feature type="chain" id="PRO_0000231147" description="3-dehydroquinate synthase">
    <location>
        <begin position="1"/>
        <end position="379"/>
    </location>
</feature>
<feature type="binding site" evidence="1">
    <location>
        <begin position="113"/>
        <end position="117"/>
    </location>
    <ligand>
        <name>NAD(+)</name>
        <dbReference type="ChEBI" id="CHEBI:57540"/>
    </ligand>
</feature>
<feature type="binding site" evidence="1">
    <location>
        <begin position="137"/>
        <end position="138"/>
    </location>
    <ligand>
        <name>NAD(+)</name>
        <dbReference type="ChEBI" id="CHEBI:57540"/>
    </ligand>
</feature>
<feature type="binding site" evidence="1">
    <location>
        <position position="150"/>
    </location>
    <ligand>
        <name>NAD(+)</name>
        <dbReference type="ChEBI" id="CHEBI:57540"/>
    </ligand>
</feature>
<feature type="binding site" evidence="1">
    <location>
        <position position="159"/>
    </location>
    <ligand>
        <name>NAD(+)</name>
        <dbReference type="ChEBI" id="CHEBI:57540"/>
    </ligand>
</feature>
<feature type="binding site" evidence="1">
    <location>
        <position position="192"/>
    </location>
    <ligand>
        <name>Zn(2+)</name>
        <dbReference type="ChEBI" id="CHEBI:29105"/>
    </ligand>
</feature>
<feature type="binding site" evidence="1">
    <location>
        <position position="256"/>
    </location>
    <ligand>
        <name>Zn(2+)</name>
        <dbReference type="ChEBI" id="CHEBI:29105"/>
    </ligand>
</feature>
<feature type="binding site" evidence="1">
    <location>
        <position position="274"/>
    </location>
    <ligand>
        <name>Zn(2+)</name>
        <dbReference type="ChEBI" id="CHEBI:29105"/>
    </ligand>
</feature>
<comment type="function">
    <text evidence="1">Catalyzes the conversion of 3-deoxy-D-arabino-heptulosonate 7-phosphate (DAHP) to dehydroquinate (DHQ).</text>
</comment>
<comment type="catalytic activity">
    <reaction evidence="1">
        <text>7-phospho-2-dehydro-3-deoxy-D-arabino-heptonate = 3-dehydroquinate + phosphate</text>
        <dbReference type="Rhea" id="RHEA:21968"/>
        <dbReference type="ChEBI" id="CHEBI:32364"/>
        <dbReference type="ChEBI" id="CHEBI:43474"/>
        <dbReference type="ChEBI" id="CHEBI:58394"/>
        <dbReference type="EC" id="4.2.3.4"/>
    </reaction>
</comment>
<comment type="cofactor">
    <cofactor evidence="1">
        <name>Co(2+)</name>
        <dbReference type="ChEBI" id="CHEBI:48828"/>
    </cofactor>
    <cofactor evidence="1">
        <name>Zn(2+)</name>
        <dbReference type="ChEBI" id="CHEBI:29105"/>
    </cofactor>
    <text evidence="1">Binds 1 divalent metal cation per subunit. Can use either Co(2+) or Zn(2+).</text>
</comment>
<comment type="cofactor">
    <cofactor evidence="1">
        <name>NAD(+)</name>
        <dbReference type="ChEBI" id="CHEBI:57540"/>
    </cofactor>
</comment>
<comment type="pathway">
    <text evidence="1">Metabolic intermediate biosynthesis; chorismate biosynthesis; chorismate from D-erythrose 4-phosphate and phosphoenolpyruvate: step 2/7.</text>
</comment>
<comment type="subcellular location">
    <subcellularLocation>
        <location evidence="1">Cytoplasm</location>
    </subcellularLocation>
</comment>
<comment type="similarity">
    <text evidence="1">Belongs to the sugar phosphate cyclases superfamily. Dehydroquinate synthase family.</text>
</comment>
<proteinExistence type="inferred from homology"/>
<gene>
    <name evidence="1" type="primary">aroB</name>
    <name type="ordered locus">ZMO0593</name>
</gene>
<protein>
    <recommendedName>
        <fullName evidence="1">3-dehydroquinate synthase</fullName>
        <shortName evidence="1">DHQS</shortName>
        <ecNumber evidence="1">4.2.3.4</ecNumber>
    </recommendedName>
</protein>
<dbReference type="EC" id="4.2.3.4" evidence="1"/>
<dbReference type="EMBL" id="AE008692">
    <property type="protein sequence ID" value="AAV89217.1"/>
    <property type="molecule type" value="Genomic_DNA"/>
</dbReference>
<dbReference type="RefSeq" id="WP_011240496.1">
    <property type="nucleotide sequence ID" value="NZ_CP035711.1"/>
</dbReference>
<dbReference type="SMR" id="Q5NPY8"/>
<dbReference type="STRING" id="264203.ZMO0593"/>
<dbReference type="KEGG" id="zmo:ZMO0593"/>
<dbReference type="eggNOG" id="COG0337">
    <property type="taxonomic scope" value="Bacteria"/>
</dbReference>
<dbReference type="HOGENOM" id="CLU_001201_0_2_5"/>
<dbReference type="UniPathway" id="UPA00053">
    <property type="reaction ID" value="UER00085"/>
</dbReference>
<dbReference type="Proteomes" id="UP000001173">
    <property type="component" value="Chromosome"/>
</dbReference>
<dbReference type="GO" id="GO:0005737">
    <property type="term" value="C:cytoplasm"/>
    <property type="evidence" value="ECO:0007669"/>
    <property type="project" value="UniProtKB-SubCell"/>
</dbReference>
<dbReference type="GO" id="GO:0003856">
    <property type="term" value="F:3-dehydroquinate synthase activity"/>
    <property type="evidence" value="ECO:0007669"/>
    <property type="project" value="UniProtKB-UniRule"/>
</dbReference>
<dbReference type="GO" id="GO:0046872">
    <property type="term" value="F:metal ion binding"/>
    <property type="evidence" value="ECO:0007669"/>
    <property type="project" value="UniProtKB-KW"/>
</dbReference>
<dbReference type="GO" id="GO:0000166">
    <property type="term" value="F:nucleotide binding"/>
    <property type="evidence" value="ECO:0007669"/>
    <property type="project" value="UniProtKB-KW"/>
</dbReference>
<dbReference type="GO" id="GO:0008652">
    <property type="term" value="P:amino acid biosynthetic process"/>
    <property type="evidence" value="ECO:0007669"/>
    <property type="project" value="UniProtKB-KW"/>
</dbReference>
<dbReference type="GO" id="GO:0009073">
    <property type="term" value="P:aromatic amino acid family biosynthetic process"/>
    <property type="evidence" value="ECO:0007669"/>
    <property type="project" value="UniProtKB-KW"/>
</dbReference>
<dbReference type="GO" id="GO:0009423">
    <property type="term" value="P:chorismate biosynthetic process"/>
    <property type="evidence" value="ECO:0007669"/>
    <property type="project" value="UniProtKB-UniRule"/>
</dbReference>
<dbReference type="CDD" id="cd08195">
    <property type="entry name" value="DHQS"/>
    <property type="match status" value="1"/>
</dbReference>
<dbReference type="FunFam" id="3.40.50.1970:FF:000001">
    <property type="entry name" value="3-dehydroquinate synthase"/>
    <property type="match status" value="1"/>
</dbReference>
<dbReference type="Gene3D" id="3.40.50.1970">
    <property type="match status" value="1"/>
</dbReference>
<dbReference type="Gene3D" id="1.20.1090.10">
    <property type="entry name" value="Dehydroquinate synthase-like - alpha domain"/>
    <property type="match status" value="1"/>
</dbReference>
<dbReference type="HAMAP" id="MF_00110">
    <property type="entry name" value="DHQ_synthase"/>
    <property type="match status" value="1"/>
</dbReference>
<dbReference type="InterPro" id="IPR050071">
    <property type="entry name" value="Dehydroquinate_synthase"/>
</dbReference>
<dbReference type="InterPro" id="IPR016037">
    <property type="entry name" value="DHQ_synth_AroB"/>
</dbReference>
<dbReference type="InterPro" id="IPR030963">
    <property type="entry name" value="DHQ_synth_fam"/>
</dbReference>
<dbReference type="InterPro" id="IPR030960">
    <property type="entry name" value="DHQS/DOIS_N"/>
</dbReference>
<dbReference type="InterPro" id="IPR056179">
    <property type="entry name" value="DHQS_C"/>
</dbReference>
<dbReference type="NCBIfam" id="TIGR01357">
    <property type="entry name" value="aroB"/>
    <property type="match status" value="1"/>
</dbReference>
<dbReference type="PANTHER" id="PTHR43622">
    <property type="entry name" value="3-DEHYDROQUINATE SYNTHASE"/>
    <property type="match status" value="1"/>
</dbReference>
<dbReference type="PANTHER" id="PTHR43622:SF7">
    <property type="entry name" value="3-DEHYDROQUINATE SYNTHASE, CHLOROPLASTIC"/>
    <property type="match status" value="1"/>
</dbReference>
<dbReference type="Pfam" id="PF01761">
    <property type="entry name" value="DHQ_synthase"/>
    <property type="match status" value="1"/>
</dbReference>
<dbReference type="Pfam" id="PF24621">
    <property type="entry name" value="DHQS_C"/>
    <property type="match status" value="1"/>
</dbReference>
<dbReference type="PIRSF" id="PIRSF001455">
    <property type="entry name" value="DHQ_synth"/>
    <property type="match status" value="1"/>
</dbReference>
<dbReference type="SUPFAM" id="SSF56796">
    <property type="entry name" value="Dehydroquinate synthase-like"/>
    <property type="match status" value="1"/>
</dbReference>
<evidence type="ECO:0000255" key="1">
    <source>
        <dbReference type="HAMAP-Rule" id="MF_00110"/>
    </source>
</evidence>
<sequence>MSSEVSKTVTVPIDLGNHSYKIDIGAGLYQQAVSILTPYVRNRRFIVITDENVARCQLPEFEKSFHEAGVTVDSIILPAGEATKSWHHLAELCDQLIRRGVERRDAIIALGGGVIGDLVGFAAAILKRGCQFIQIPTSLLAQVDSSVGGKTAINCEAGKNLIGAFHQPVFVLIDPDALQTLPARQLRAGYGEIIKYGLIDDPDFFAWCEEHGAALIEGDKASRLYAIEHSIRAKALIVADDEKEISGKRALLNLGHTFGHALEADTGFSDKLFHGEAVAAGSALAFGFSYVKNLASKEDIQRIIKHLRETGLPASLEEAGVKASGKELVAHMMHDKKMEAGRLPFLLARGIGKSFLDKEVNLEEIAAFLDSPLARKGTI</sequence>
<name>AROB_ZYMMO</name>
<organism>
    <name type="scientific">Zymomonas mobilis subsp. mobilis (strain ATCC 31821 / ZM4 / CP4)</name>
    <dbReference type="NCBI Taxonomy" id="264203"/>
    <lineage>
        <taxon>Bacteria</taxon>
        <taxon>Pseudomonadati</taxon>
        <taxon>Pseudomonadota</taxon>
        <taxon>Alphaproteobacteria</taxon>
        <taxon>Sphingomonadales</taxon>
        <taxon>Zymomonadaceae</taxon>
        <taxon>Zymomonas</taxon>
    </lineage>
</organism>
<keyword id="KW-0028">Amino-acid biosynthesis</keyword>
<keyword id="KW-0057">Aromatic amino acid biosynthesis</keyword>
<keyword id="KW-0170">Cobalt</keyword>
<keyword id="KW-0963">Cytoplasm</keyword>
<keyword id="KW-0456">Lyase</keyword>
<keyword id="KW-0479">Metal-binding</keyword>
<keyword id="KW-0520">NAD</keyword>
<keyword id="KW-0547">Nucleotide-binding</keyword>
<keyword id="KW-1185">Reference proteome</keyword>
<keyword id="KW-0862">Zinc</keyword>
<accession>Q5NPY8</accession>